<feature type="chain" id="PRO_1000199071" description="Cysteine--tRNA ligase">
    <location>
        <begin position="1"/>
        <end position="494"/>
    </location>
</feature>
<feature type="short sequence motif" description="'HIGH' region">
    <location>
        <begin position="31"/>
        <end position="41"/>
    </location>
</feature>
<feature type="short sequence motif" description="'KMSKS' region">
    <location>
        <begin position="266"/>
        <end position="270"/>
    </location>
</feature>
<feature type="binding site" evidence="1">
    <location>
        <position position="29"/>
    </location>
    <ligand>
        <name>Zn(2+)</name>
        <dbReference type="ChEBI" id="CHEBI:29105"/>
    </ligand>
</feature>
<feature type="binding site" evidence="1">
    <location>
        <position position="209"/>
    </location>
    <ligand>
        <name>Zn(2+)</name>
        <dbReference type="ChEBI" id="CHEBI:29105"/>
    </ligand>
</feature>
<feature type="binding site" evidence="1">
    <location>
        <position position="234"/>
    </location>
    <ligand>
        <name>Zn(2+)</name>
        <dbReference type="ChEBI" id="CHEBI:29105"/>
    </ligand>
</feature>
<feature type="binding site" evidence="1">
    <location>
        <position position="238"/>
    </location>
    <ligand>
        <name>Zn(2+)</name>
        <dbReference type="ChEBI" id="CHEBI:29105"/>
    </ligand>
</feature>
<feature type="binding site" evidence="1">
    <location>
        <position position="269"/>
    </location>
    <ligand>
        <name>ATP</name>
        <dbReference type="ChEBI" id="CHEBI:30616"/>
    </ligand>
</feature>
<accession>B9LZV4</accession>
<proteinExistence type="inferred from homology"/>
<keyword id="KW-0030">Aminoacyl-tRNA synthetase</keyword>
<keyword id="KW-0067">ATP-binding</keyword>
<keyword id="KW-0963">Cytoplasm</keyword>
<keyword id="KW-0436">Ligase</keyword>
<keyword id="KW-0479">Metal-binding</keyword>
<keyword id="KW-0547">Nucleotide-binding</keyword>
<keyword id="KW-0648">Protein biosynthesis</keyword>
<keyword id="KW-1185">Reference proteome</keyword>
<keyword id="KW-0862">Zinc</keyword>
<evidence type="ECO:0000255" key="1">
    <source>
        <dbReference type="HAMAP-Rule" id="MF_00041"/>
    </source>
</evidence>
<comment type="catalytic activity">
    <reaction evidence="1">
        <text>tRNA(Cys) + L-cysteine + ATP = L-cysteinyl-tRNA(Cys) + AMP + diphosphate</text>
        <dbReference type="Rhea" id="RHEA:17773"/>
        <dbReference type="Rhea" id="RHEA-COMP:9661"/>
        <dbReference type="Rhea" id="RHEA-COMP:9679"/>
        <dbReference type="ChEBI" id="CHEBI:30616"/>
        <dbReference type="ChEBI" id="CHEBI:33019"/>
        <dbReference type="ChEBI" id="CHEBI:35235"/>
        <dbReference type="ChEBI" id="CHEBI:78442"/>
        <dbReference type="ChEBI" id="CHEBI:78517"/>
        <dbReference type="ChEBI" id="CHEBI:456215"/>
        <dbReference type="EC" id="6.1.1.16"/>
    </reaction>
</comment>
<comment type="cofactor">
    <cofactor evidence="1">
        <name>Zn(2+)</name>
        <dbReference type="ChEBI" id="CHEBI:29105"/>
    </cofactor>
    <text evidence="1">Binds 1 zinc ion per subunit.</text>
</comment>
<comment type="subunit">
    <text evidence="1">Monomer.</text>
</comment>
<comment type="subcellular location">
    <subcellularLocation>
        <location evidence="1">Cytoplasm</location>
    </subcellularLocation>
</comment>
<comment type="similarity">
    <text evidence="1">Belongs to the class-I aminoacyl-tRNA synthetase family.</text>
</comment>
<dbReference type="EC" id="6.1.1.16" evidence="1"/>
<dbReference type="EMBL" id="CP001390">
    <property type="protein sequence ID" value="ACM18918.1"/>
    <property type="molecule type" value="Genomic_DNA"/>
</dbReference>
<dbReference type="RefSeq" id="WP_012645647.1">
    <property type="nucleotide sequence ID" value="NC_011979.1"/>
</dbReference>
<dbReference type="SMR" id="B9LZV4"/>
<dbReference type="STRING" id="316067.Geob_0551"/>
<dbReference type="KEGG" id="geo:Geob_0551"/>
<dbReference type="eggNOG" id="COG0215">
    <property type="taxonomic scope" value="Bacteria"/>
</dbReference>
<dbReference type="HOGENOM" id="CLU_013528_0_1_7"/>
<dbReference type="OrthoDB" id="9815130at2"/>
<dbReference type="Proteomes" id="UP000007721">
    <property type="component" value="Chromosome"/>
</dbReference>
<dbReference type="GO" id="GO:0005829">
    <property type="term" value="C:cytosol"/>
    <property type="evidence" value="ECO:0007669"/>
    <property type="project" value="TreeGrafter"/>
</dbReference>
<dbReference type="GO" id="GO:0005524">
    <property type="term" value="F:ATP binding"/>
    <property type="evidence" value="ECO:0007669"/>
    <property type="project" value="UniProtKB-UniRule"/>
</dbReference>
<dbReference type="GO" id="GO:0004817">
    <property type="term" value="F:cysteine-tRNA ligase activity"/>
    <property type="evidence" value="ECO:0007669"/>
    <property type="project" value="UniProtKB-UniRule"/>
</dbReference>
<dbReference type="GO" id="GO:0008270">
    <property type="term" value="F:zinc ion binding"/>
    <property type="evidence" value="ECO:0007669"/>
    <property type="project" value="UniProtKB-UniRule"/>
</dbReference>
<dbReference type="GO" id="GO:0006423">
    <property type="term" value="P:cysteinyl-tRNA aminoacylation"/>
    <property type="evidence" value="ECO:0007669"/>
    <property type="project" value="UniProtKB-UniRule"/>
</dbReference>
<dbReference type="CDD" id="cd07963">
    <property type="entry name" value="Anticodon_Ia_Cys"/>
    <property type="match status" value="1"/>
</dbReference>
<dbReference type="CDD" id="cd00672">
    <property type="entry name" value="CysRS_core"/>
    <property type="match status" value="1"/>
</dbReference>
<dbReference type="FunFam" id="3.40.50.620:FF:000009">
    <property type="entry name" value="Cysteine--tRNA ligase"/>
    <property type="match status" value="1"/>
</dbReference>
<dbReference type="Gene3D" id="1.20.120.1910">
    <property type="entry name" value="Cysteine-tRNA ligase, C-terminal anti-codon recognition domain"/>
    <property type="match status" value="1"/>
</dbReference>
<dbReference type="Gene3D" id="3.40.50.620">
    <property type="entry name" value="HUPs"/>
    <property type="match status" value="1"/>
</dbReference>
<dbReference type="HAMAP" id="MF_00041">
    <property type="entry name" value="Cys_tRNA_synth"/>
    <property type="match status" value="1"/>
</dbReference>
<dbReference type="InterPro" id="IPR015803">
    <property type="entry name" value="Cys-tRNA-ligase"/>
</dbReference>
<dbReference type="InterPro" id="IPR015273">
    <property type="entry name" value="Cys-tRNA-synt_Ia_DALR"/>
</dbReference>
<dbReference type="InterPro" id="IPR024909">
    <property type="entry name" value="Cys-tRNA/MSH_ligase"/>
</dbReference>
<dbReference type="InterPro" id="IPR056411">
    <property type="entry name" value="CysS_C"/>
</dbReference>
<dbReference type="InterPro" id="IPR014729">
    <property type="entry name" value="Rossmann-like_a/b/a_fold"/>
</dbReference>
<dbReference type="InterPro" id="IPR032678">
    <property type="entry name" value="tRNA-synt_1_cat_dom"/>
</dbReference>
<dbReference type="InterPro" id="IPR009080">
    <property type="entry name" value="tRNAsynth_Ia_anticodon-bd"/>
</dbReference>
<dbReference type="NCBIfam" id="TIGR00435">
    <property type="entry name" value="cysS"/>
    <property type="match status" value="1"/>
</dbReference>
<dbReference type="PANTHER" id="PTHR10890:SF3">
    <property type="entry name" value="CYSTEINE--TRNA LIGASE, CYTOPLASMIC"/>
    <property type="match status" value="1"/>
</dbReference>
<dbReference type="PANTHER" id="PTHR10890">
    <property type="entry name" value="CYSTEINYL-TRNA SYNTHETASE"/>
    <property type="match status" value="1"/>
</dbReference>
<dbReference type="Pfam" id="PF23493">
    <property type="entry name" value="CysS_C"/>
    <property type="match status" value="1"/>
</dbReference>
<dbReference type="Pfam" id="PF09190">
    <property type="entry name" value="DALR_2"/>
    <property type="match status" value="1"/>
</dbReference>
<dbReference type="Pfam" id="PF01406">
    <property type="entry name" value="tRNA-synt_1e"/>
    <property type="match status" value="1"/>
</dbReference>
<dbReference type="PRINTS" id="PR00983">
    <property type="entry name" value="TRNASYNTHCYS"/>
</dbReference>
<dbReference type="SMART" id="SM00840">
    <property type="entry name" value="DALR_2"/>
    <property type="match status" value="1"/>
</dbReference>
<dbReference type="SUPFAM" id="SSF47323">
    <property type="entry name" value="Anticodon-binding domain of a subclass of class I aminoacyl-tRNA synthetases"/>
    <property type="match status" value="1"/>
</dbReference>
<dbReference type="SUPFAM" id="SSF52374">
    <property type="entry name" value="Nucleotidylyl transferase"/>
    <property type="match status" value="1"/>
</dbReference>
<organism>
    <name type="scientific">Geotalea daltonii (strain DSM 22248 / JCM 15807 / FRC-32)</name>
    <name type="common">Geobacter daltonii</name>
    <dbReference type="NCBI Taxonomy" id="316067"/>
    <lineage>
        <taxon>Bacteria</taxon>
        <taxon>Pseudomonadati</taxon>
        <taxon>Thermodesulfobacteriota</taxon>
        <taxon>Desulfuromonadia</taxon>
        <taxon>Geobacterales</taxon>
        <taxon>Geobacteraceae</taxon>
        <taxon>Geotalea</taxon>
    </lineage>
</organism>
<sequence>MGLRVYNTLSGNKEEFVPVEPGKVKMYVCGVTVYDHCHIGHARANVVFDVIYRYFCHLGLDVTYVRNYTDIDDKIINRANREGVTYDLISERFIKEFDRDMERLGLKLPTCQPKATEHIDEIISLVQTLIDKDFAYQAGGDVNFCVEKFDSYLKLSGRTLEDMQAGARIEVDERKRHPMDFALWKEAKPGEPFWESPWGKGRPGWHIECSAMSMKYLGTTFDIHGGGKDLIFPHHENEIAQSEAATGKPFVNYWLHNGFVNINSEKMSKSLGNFFTIKEVLDRYDNEVLRFFLLSAHYRSPIDFSDQNLTEAEAGLERIYKALAAVEETLAAGNGCTGAPVDASSLNEAEGELFDKTTSISARFGEAMDDDFNTALAMAHVFDLVRCVNRVLSETAGASDNICSLCTLIKAEVAKIAGVLGIFSSKPASFLERLKSRKAGNLDIAVDEIERLIAERTAARKAKDFKRSDEIRDQLAAKNIVLLDSQQGTTWSVK</sequence>
<name>SYC_GEODF</name>
<reference key="1">
    <citation type="submission" date="2009-01" db="EMBL/GenBank/DDBJ databases">
        <title>Complete sequence of Geobacter sp. FRC-32.</title>
        <authorList>
            <consortium name="US DOE Joint Genome Institute"/>
            <person name="Lucas S."/>
            <person name="Copeland A."/>
            <person name="Lapidus A."/>
            <person name="Glavina del Rio T."/>
            <person name="Dalin E."/>
            <person name="Tice H."/>
            <person name="Bruce D."/>
            <person name="Goodwin L."/>
            <person name="Pitluck S."/>
            <person name="Saunders E."/>
            <person name="Brettin T."/>
            <person name="Detter J.C."/>
            <person name="Han C."/>
            <person name="Larimer F."/>
            <person name="Land M."/>
            <person name="Hauser L."/>
            <person name="Kyrpides N."/>
            <person name="Ovchinnikova G."/>
            <person name="Kostka J."/>
            <person name="Richardson P."/>
        </authorList>
    </citation>
    <scope>NUCLEOTIDE SEQUENCE [LARGE SCALE GENOMIC DNA]</scope>
    <source>
        <strain>DSM 22248 / JCM 15807 / FRC-32</strain>
    </source>
</reference>
<protein>
    <recommendedName>
        <fullName evidence="1">Cysteine--tRNA ligase</fullName>
        <ecNumber evidence="1">6.1.1.16</ecNumber>
    </recommendedName>
    <alternativeName>
        <fullName evidence="1">Cysteinyl-tRNA synthetase</fullName>
        <shortName evidence="1">CysRS</shortName>
    </alternativeName>
</protein>
<gene>
    <name evidence="1" type="primary">cysS</name>
    <name type="ordered locus">Geob_0551</name>
</gene>